<sequence>HSEGTFTSDYSKYMDNRRAKDFVQWLMSTKRNGHAEGTYTSDVDSLSDYFKAKRFVDSLKSY</sequence>
<gene>
    <name type="primary">gcg</name>
</gene>
<evidence type="ECO:0000305" key="1"/>
<accession>P09687</accession>
<accession>Q9PRW8</accession>
<accession>Q9PRW9</accession>
<accession>Q9PRX0</accession>
<reference key="1">
    <citation type="journal article" date="1994" name="Peptides">
        <title>Primary structures of peptides derived from proglucagon isolated from the pancreas of the elasmobranch fish, Scyliorhinus canicula.</title>
        <authorList>
            <person name="Conlon J.M."/>
            <person name="Hazon N."/>
            <person name="Thim L."/>
        </authorList>
    </citation>
    <scope>PROTEIN SEQUENCE</scope>
    <source>
        <tissue>Pancreas</tissue>
    </source>
</reference>
<reference key="2">
    <citation type="journal article" date="1987" name="FEBS Lett.">
        <title>Primary structure of glucagon from the gut of the common dogfish (Scyliorhinus canicula).</title>
        <authorList>
            <person name="Conlon J.M."/>
            <person name="O'Toole L."/>
            <person name="Thim L."/>
        </authorList>
    </citation>
    <scope>PROTEIN SEQUENCE OF 1-29</scope>
    <source>
        <tissue>Pancreas</tissue>
    </source>
</reference>
<protein>
    <recommendedName>
        <fullName>Glucagon</fullName>
    </recommendedName>
    <component>
        <recommendedName>
            <fullName>Glucagon-33</fullName>
        </recommendedName>
    </component>
    <component>
        <recommendedName>
            <fullName>Glucagon-29</fullName>
        </recommendedName>
    </component>
    <component>
        <recommendedName>
            <fullName>Glucagon-like peptide</fullName>
        </recommendedName>
    </component>
</protein>
<comment type="function">
    <text>Promotes hydrolysis of glycogen and lipids, and raises the blood sugar level.</text>
</comment>
<comment type="subcellular location">
    <subcellularLocation>
        <location>Secreted</location>
    </subcellularLocation>
</comment>
<comment type="induction">
    <text>Produced in the A cells of the islets of Langerhans in response to a drop in blood sugar concentration.</text>
</comment>
<comment type="similarity">
    <text evidence="1">Belongs to the glucagon family.</text>
</comment>
<proteinExistence type="evidence at protein level"/>
<name>GLUC_SCYCA</name>
<dbReference type="PIR" id="A26992">
    <property type="entry name" value="GCDF"/>
</dbReference>
<dbReference type="SMR" id="P09687"/>
<dbReference type="GO" id="GO:0005576">
    <property type="term" value="C:extracellular region"/>
    <property type="evidence" value="ECO:0007669"/>
    <property type="project" value="UniProtKB-SubCell"/>
</dbReference>
<dbReference type="GO" id="GO:0005179">
    <property type="term" value="F:hormone activity"/>
    <property type="evidence" value="ECO:0007669"/>
    <property type="project" value="UniProtKB-KW"/>
</dbReference>
<dbReference type="Gene3D" id="6.10.250.590">
    <property type="match status" value="2"/>
</dbReference>
<dbReference type="InterPro" id="IPR015550">
    <property type="entry name" value="Glucagon"/>
</dbReference>
<dbReference type="InterPro" id="IPR000532">
    <property type="entry name" value="Glucagon_GIP_secretin_VIP"/>
</dbReference>
<dbReference type="PANTHER" id="PTHR11418">
    <property type="entry name" value="GLUCAGON"/>
    <property type="match status" value="1"/>
</dbReference>
<dbReference type="PANTHER" id="PTHR11418:SF0">
    <property type="entry name" value="PRO-GLUCAGON"/>
    <property type="match status" value="1"/>
</dbReference>
<dbReference type="Pfam" id="PF00123">
    <property type="entry name" value="Hormone_2"/>
    <property type="match status" value="1"/>
</dbReference>
<dbReference type="PRINTS" id="PR00275">
    <property type="entry name" value="GLUCAGON"/>
</dbReference>
<dbReference type="SMART" id="SM00070">
    <property type="entry name" value="GLUCA"/>
    <property type="match status" value="2"/>
</dbReference>
<dbReference type="PROSITE" id="PS00260">
    <property type="entry name" value="GLUCAGON"/>
    <property type="match status" value="2"/>
</dbReference>
<organism>
    <name type="scientific">Scyliorhinus canicula</name>
    <name type="common">Small-spotted catshark</name>
    <name type="synonym">Squalus canicula</name>
    <dbReference type="NCBI Taxonomy" id="7830"/>
    <lineage>
        <taxon>Eukaryota</taxon>
        <taxon>Metazoa</taxon>
        <taxon>Chordata</taxon>
        <taxon>Craniata</taxon>
        <taxon>Vertebrata</taxon>
        <taxon>Chondrichthyes</taxon>
        <taxon>Elasmobranchii</taxon>
        <taxon>Galeomorphii</taxon>
        <taxon>Galeoidea</taxon>
        <taxon>Carcharhiniformes</taxon>
        <taxon>Scyliorhinidae</taxon>
        <taxon>Scyliorhinus</taxon>
    </lineage>
</organism>
<feature type="peptide" id="PRO_0000011387" description="Glucagon-33">
    <location>
        <begin position="1"/>
        <end position="33"/>
    </location>
</feature>
<feature type="peptide" id="PRO_0000011388" description="Glucagon-29">
    <location>
        <begin position="1"/>
        <end position="29"/>
    </location>
</feature>
<feature type="peptide" id="PRO_0000011389" description="Glucagon-like peptide">
    <location>
        <begin position="34"/>
        <end position="62"/>
    </location>
</feature>
<feature type="sequence conflict" description="In Ref. 2; AA sequence." evidence="1" ref="2">
    <original>S</original>
    <variation>N</variation>
    <location>
        <position position="28"/>
    </location>
</feature>
<feature type="non-consecutive residues" evidence="1">
    <location>
        <begin position="33"/>
        <end position="34"/>
    </location>
</feature>
<keyword id="KW-0903">Direct protein sequencing</keyword>
<keyword id="KW-0372">Hormone</keyword>
<keyword id="KW-0964">Secreted</keyword>